<gene>
    <name evidence="4" type="primary">tubR</name>
    <name type="ORF">CST190</name>
</gene>
<protein>
    <recommendedName>
        <fullName evidence="6">DNA-binding protein TubR</fullName>
    </recommendedName>
    <alternativeName>
        <fullName evidence="5">Centromere-binding protein</fullName>
        <shortName evidence="5">CBP</shortName>
    </alternativeName>
</protein>
<reference key="1">
    <citation type="journal article" date="2005" name="Proc. Natl. Acad. Sci. U.S.A.">
        <title>The genome sequence of Clostridium botulinum type C neurotoxin-converting phage and the molecular mechanisms of unstable lysogeny.</title>
        <authorList>
            <person name="Sakaguchi Y."/>
            <person name="Hayashi T."/>
            <person name="Kurokawa K."/>
            <person name="Nakayama K."/>
            <person name="Oshima K."/>
            <person name="Fujinaga Y."/>
            <person name="Ohnishi M."/>
            <person name="Ohtsubo E."/>
            <person name="Hattori M."/>
            <person name="Oguma K."/>
        </authorList>
    </citation>
    <scope>NUCLEOTIDE SEQUENCE [LARGE SCALE GENOMIC DNA]</scope>
    <source>
        <strain>Clostridium phage c-st</strain>
    </source>
</reference>
<reference key="2">
    <citation type="journal article" date="2012" name="Proc. Natl. Acad. Sci. U.S.A.">
        <title>Tubulin homolog TubZ in a phage-encoded partition system.</title>
        <authorList>
            <person name="Oliva M.A."/>
            <person name="Martin-Galiano A.J."/>
            <person name="Sakaguchi Y."/>
            <person name="Andreu J.M."/>
        </authorList>
    </citation>
    <scope>FUNCTION</scope>
    <scope>SUBUNIT</scope>
    <scope>DNA-BINDING</scope>
    <source>
        <strain>Clostridium phage c-st</strain>
    </source>
</reference>
<reference key="3">
    <citation type="journal article" date="2018" name="Nucleic Acids Res.">
        <title>The TubR-centromere complex adopts a double-ring segrosome structure in Type III partition systems.</title>
        <authorList>
            <person name="Martin-Garcia B."/>
            <person name="Martin-Gonzalez A."/>
            <person name="Carrasco C."/>
            <person name="Hernandez-Arriaga A.M."/>
            <person name="Ruiz-Quero R."/>
            <person name="Diaz-Orejas R."/>
            <person name="Aicart-Ramos C."/>
            <person name="Moreno-Herrero F."/>
            <person name="Oliva M.A."/>
        </authorList>
    </citation>
    <scope>FUNCTION</scope>
    <scope>SUBUNIT</scope>
    <scope>DNA-BINDING</scope>
    <source>
        <strain>Clostridium phage c-st</strain>
    </source>
</reference>
<comment type="function">
    <text evidence="2 3">A DNA-binding protein that is part of the type III partition system presumably used to ensure correct segregation of this bacteriophage. Binds to tubC (centromere-like site) DNA upstream of its own gene in a sequence-specific fashion (consensus TTGAC); binds to multiple sites in the tubC region, probably spreading from an initial site (PubMed:22538818, PubMed:29762781). Upon binding to tubC forms flexible loops over about 1 kb of DNA that forms 2 rings, covering tubC and the promoter region. This probably shuts off transcription of the operon. DNA is both bent and untwisted by TubR (PubMed:29762781). The TubR-tubC DNA complex binds to TubZ forming large bundles and decreasing TubZ's GTPase activity (PubMed:22538818).</text>
</comment>
<comment type="subunit">
    <text evidence="2 3">Monomer; probably dimerizes when bound to DNA (PubMed:29762781). Binds to TubZ when associated with tubC DNA (PubMed:22538818).</text>
</comment>
<comment type="subcellular location">
    <subcellularLocation>
        <location evidence="6">Host cytoplasm</location>
    </subcellularLocation>
</comment>
<comment type="miscellaneous">
    <text evidence="1">This bacteriophage also exists as a circular plasmid prophage in its host.</text>
</comment>
<organism>
    <name type="scientific">Clostridium botulinum C phage</name>
    <name type="common">Clostridium botulinum C bacteriophage</name>
    <dbReference type="NCBI Taxonomy" id="12336"/>
    <lineage>
        <taxon>Viruses</taxon>
        <taxon>Duplodnaviria</taxon>
        <taxon>Heunggongvirae</taxon>
        <taxon>Uroviricota</taxon>
        <taxon>Caudoviricetes</taxon>
    </lineage>
</organism>
<keyword id="KW-0002">3D-structure</keyword>
<keyword id="KW-0238">DNA-binding</keyword>
<keyword id="KW-1035">Host cytoplasm</keyword>
<keyword id="KW-0616">Plasmid partition</keyword>
<keyword id="KW-1185">Reference proteome</keyword>
<accession>Q331T6</accession>
<feature type="chain" id="PRO_0000448568" description="DNA-binding protein TubR">
    <location>
        <begin position="1"/>
        <end position="81"/>
    </location>
</feature>
<feature type="helix" evidence="7">
    <location>
        <begin position="5"/>
        <end position="17"/>
    </location>
</feature>
<feature type="strand" evidence="7">
    <location>
        <begin position="22"/>
        <end position="24"/>
    </location>
</feature>
<feature type="helix" evidence="7">
    <location>
        <begin position="28"/>
        <end position="34"/>
    </location>
</feature>
<feature type="helix" evidence="7">
    <location>
        <begin position="39"/>
        <end position="51"/>
    </location>
</feature>
<feature type="strand" evidence="7">
    <location>
        <begin position="54"/>
        <end position="57"/>
    </location>
</feature>
<feature type="strand" evidence="7">
    <location>
        <begin position="61"/>
        <end position="63"/>
    </location>
</feature>
<feature type="strand" evidence="7">
    <location>
        <begin position="67"/>
        <end position="69"/>
    </location>
</feature>
<feature type="helix" evidence="7">
    <location>
        <begin position="71"/>
        <end position="79"/>
    </location>
</feature>
<evidence type="ECO:0000269" key="1">
    <source>
    </source>
</evidence>
<evidence type="ECO:0000269" key="2">
    <source>
    </source>
</evidence>
<evidence type="ECO:0000269" key="3">
    <source>
    </source>
</evidence>
<evidence type="ECO:0000303" key="4">
    <source>
    </source>
</evidence>
<evidence type="ECO:0000303" key="5">
    <source>
    </source>
</evidence>
<evidence type="ECO:0000305" key="6"/>
<evidence type="ECO:0007829" key="7">
    <source>
        <dbReference type="PDB" id="6TEY"/>
    </source>
</evidence>
<organismHost>
    <name type="scientific">Clostridium botulinum C</name>
    <dbReference type="NCBI Taxonomy" id="36828"/>
</organismHost>
<dbReference type="EMBL" id="AP008983">
    <property type="protein sequence ID" value="BAE47888.1"/>
    <property type="molecule type" value="Genomic_DNA"/>
</dbReference>
<dbReference type="RefSeq" id="YP_398620.1">
    <property type="nucleotide sequence ID" value="NC_007581.1"/>
</dbReference>
<dbReference type="PDB" id="6TEY">
    <property type="method" value="NMR"/>
    <property type="chains" value="A=1-81"/>
</dbReference>
<dbReference type="PDBsum" id="6TEY"/>
<dbReference type="BMRB" id="Q331T6"/>
<dbReference type="SMR" id="Q331T6"/>
<dbReference type="GeneID" id="3772976"/>
<dbReference type="KEGG" id="vg:3772976"/>
<dbReference type="Proteomes" id="UP000001240">
    <property type="component" value="Segment"/>
</dbReference>
<dbReference type="GO" id="GO:0030430">
    <property type="term" value="C:host cell cytoplasm"/>
    <property type="evidence" value="ECO:0007669"/>
    <property type="project" value="UniProtKB-SubCell"/>
</dbReference>
<dbReference type="GO" id="GO:0003677">
    <property type="term" value="F:DNA binding"/>
    <property type="evidence" value="ECO:0007669"/>
    <property type="project" value="UniProtKB-KW"/>
</dbReference>
<dbReference type="GO" id="GO:0030541">
    <property type="term" value="P:plasmid partitioning"/>
    <property type="evidence" value="ECO:0007669"/>
    <property type="project" value="UniProtKB-KW"/>
</dbReference>
<dbReference type="Gene3D" id="1.10.10.10">
    <property type="entry name" value="Winged helix-like DNA-binding domain superfamily/Winged helix DNA-binding domain"/>
    <property type="match status" value="1"/>
</dbReference>
<dbReference type="InterPro" id="IPR036388">
    <property type="entry name" value="WH-like_DNA-bd_sf"/>
</dbReference>
<dbReference type="InterPro" id="IPR036390">
    <property type="entry name" value="WH_DNA-bd_sf"/>
</dbReference>
<dbReference type="SUPFAM" id="SSF46785">
    <property type="entry name" value="Winged helix' DNA-binding domain"/>
    <property type="match status" value="1"/>
</dbReference>
<sequence length="81" mass="9419">MAVNKNEYKILIMLKENQCTTELKSFTYTKLCNISKLSMSTVRRSIKKFLELQYVKEGCKQGISKTFYITPNGIEKLKSIM</sequence>
<proteinExistence type="evidence at protein level"/>
<name>TUBR_CBCP</name>